<sequence length="788" mass="86204">MEPGKGRAQPTRQVLLFFVFLGGSLVYSETWSYSIAEEMEVGTFIANVVKDMGLDVEDLVARGARVIFDDYKPYLRLDPQNGDLLLNEQLDREALCDLTEPCILHFQVLFENPLQFFRAELLVKDINDHTPTFLNNHILLKISEGATLGTLFQIDSAQDLDVGKNGVQNYTISPNPHFHLKLRDGDEGRKYPELVLDQSLDREKESQLSLTLTAVDGGSPPRSGTTLINVVVLDINDNAPEFEKPVYEVHVPESSPLDSLIIKASATDLDAGINGELSYSFSHVSRDVRKTFEIHPISGEVYLKAPLDFEIIQSYIINIQAIDGGSLSGKSSILVRVVDVNDNPPEIAMTSLTSPIPENSSPEMVVAVFSIRDQDAGDNGRMVGSIQDNLPFVLKPTFKNFYALVTEHPLDREVRNEYNITITVTDLGTPRLKTQHNITVLVSDVNDNAPAFTQTSYTLFVRENNSPALHIGSVSATDRDSGTNAQVTYSLLPPQDPHLPLASLVSINTDNGHLFALRSLDYEALQAFEFHVGATDRGSPALSSEALVRVLVLDANDNSPFVLYPLQNGSAPCTELVPRAAEPGYLVTKVVAVDGDSGQNAWLSYQLLKATEPGLFGVWAHNGEVRTARLLSERDVAKHRLVVLVKDNGEPPRSATATLQVLLVDGFSQPYLPLPEAAPSQAQADSLTVYLVVALASVSSLFLFSVFLFVAVRLCRRSRAASVGRCSVPEGPFPGHLLDVSGTGTLSQSYQYEVCLTGGSGANEFKFLKPVIPNLLSRDSDMEKAPPF</sequence>
<gene>
    <name type="primary">PCDHB18</name>
    <name type="synonym">PCDHB17</name>
</gene>
<keyword id="KW-0106">Calcium</keyword>
<keyword id="KW-0130">Cell adhesion</keyword>
<keyword id="KW-1003">Cell membrane</keyword>
<keyword id="KW-0325">Glycoprotein</keyword>
<keyword id="KW-0472">Membrane</keyword>
<keyword id="KW-1185">Reference proteome</keyword>
<keyword id="KW-0677">Repeat</keyword>
<keyword id="KW-0732">Signal</keyword>
<keyword id="KW-0812">Transmembrane</keyword>
<keyword id="KW-1133">Transmembrane helix</keyword>
<accession>Q5DRD4</accession>
<reference key="1">
    <citation type="journal article" date="2005" name="Nature">
        <title>Initial sequence of the chimpanzee genome and comparison with the human genome.</title>
        <authorList>
            <consortium name="Chimpanzee sequencing and analysis consortium"/>
        </authorList>
    </citation>
    <scope>NUCLEOTIDE SEQUENCE [LARGE SCALE GENOMIC DNA]</scope>
</reference>
<reference key="2">
    <citation type="journal article" date="2005" name="Genetics">
        <title>Comparative genomics and diversifying selection of the clustered vertebrate protocadherin genes.</title>
        <authorList>
            <person name="Wu Q."/>
        </authorList>
    </citation>
    <scope>IDENTIFICATION</scope>
</reference>
<evidence type="ECO:0000250" key="1"/>
<evidence type="ECO:0000255" key="2"/>
<evidence type="ECO:0000255" key="3">
    <source>
        <dbReference type="PROSITE-ProRule" id="PRU00043"/>
    </source>
</evidence>
<feature type="signal peptide" evidence="2">
    <location>
        <begin position="1"/>
        <end position="28"/>
    </location>
</feature>
<feature type="chain" id="PRO_0000003946" description="Protocadherin beta-18">
    <location>
        <begin position="29"/>
        <end position="788"/>
    </location>
</feature>
<feature type="topological domain" description="Extracellular" evidence="2">
    <location>
        <begin position="29"/>
        <end position="691"/>
    </location>
</feature>
<feature type="transmembrane region" description="Helical" evidence="2">
    <location>
        <begin position="692"/>
        <end position="712"/>
    </location>
</feature>
<feature type="topological domain" description="Cytoplasmic" evidence="2">
    <location>
        <begin position="713"/>
        <end position="788"/>
    </location>
</feature>
<feature type="domain" description="Cadherin 1" evidence="3">
    <location>
        <begin position="29"/>
        <end position="133"/>
    </location>
</feature>
<feature type="domain" description="Cadherin 2" evidence="3">
    <location>
        <begin position="134"/>
        <end position="242"/>
    </location>
</feature>
<feature type="domain" description="Cadherin 3" evidence="3">
    <location>
        <begin position="243"/>
        <end position="347"/>
    </location>
</feature>
<feature type="domain" description="Cadherin 4" evidence="3">
    <location>
        <begin position="348"/>
        <end position="452"/>
    </location>
</feature>
<feature type="domain" description="Cadherin 5" evidence="3">
    <location>
        <begin position="453"/>
        <end position="562"/>
    </location>
</feature>
<feature type="domain" description="Cadherin 6" evidence="3">
    <location>
        <begin position="569"/>
        <end position="672"/>
    </location>
</feature>
<feature type="glycosylation site" description="N-linked (GlcNAc...) asparagine" evidence="2">
    <location>
        <position position="169"/>
    </location>
</feature>
<feature type="glycosylation site" description="N-linked (GlcNAc...) asparagine" evidence="2">
    <location>
        <position position="419"/>
    </location>
</feature>
<feature type="glycosylation site" description="N-linked (GlcNAc...) asparagine" evidence="2">
    <location>
        <position position="437"/>
    </location>
</feature>
<feature type="glycosylation site" description="N-linked (GlcNAc...) asparagine" evidence="2">
    <location>
        <position position="568"/>
    </location>
</feature>
<comment type="function">
    <text evidence="1">Potential calcium-dependent cell-adhesion protein.</text>
</comment>
<comment type="subcellular location">
    <subcellularLocation>
        <location evidence="1">Cell membrane</location>
        <topology evidence="1">Single-pass type I membrane protein</topology>
    </subcellularLocation>
</comment>
<name>PCDBI_PANTR</name>
<protein>
    <recommendedName>
        <fullName>Protocadherin beta-18</fullName>
        <shortName>PCDH-beta-18</shortName>
    </recommendedName>
    <alternativeName>
        <fullName>Protocadherin beta-17</fullName>
    </alternativeName>
</protein>
<organism>
    <name type="scientific">Pan troglodytes</name>
    <name type="common">Chimpanzee</name>
    <dbReference type="NCBI Taxonomy" id="9598"/>
    <lineage>
        <taxon>Eukaryota</taxon>
        <taxon>Metazoa</taxon>
        <taxon>Chordata</taxon>
        <taxon>Craniata</taxon>
        <taxon>Vertebrata</taxon>
        <taxon>Euteleostomi</taxon>
        <taxon>Mammalia</taxon>
        <taxon>Eutheria</taxon>
        <taxon>Euarchontoglires</taxon>
        <taxon>Primates</taxon>
        <taxon>Haplorrhini</taxon>
        <taxon>Catarrhini</taxon>
        <taxon>Hominidae</taxon>
        <taxon>Pan</taxon>
    </lineage>
</organism>
<dbReference type="EMBL" id="GL386549">
    <property type="status" value="NOT_ANNOTATED_CDS"/>
    <property type="molecule type" value="Genomic_DNA"/>
</dbReference>
<dbReference type="SMR" id="Q5DRD4"/>
<dbReference type="STRING" id="9598.ENSPTRP00000087879"/>
<dbReference type="GlyCosmos" id="Q5DRD4">
    <property type="glycosylation" value="4 sites, No reported glycans"/>
</dbReference>
<dbReference type="InParanoid" id="Q5DRD4"/>
<dbReference type="Proteomes" id="UP000002277">
    <property type="component" value="Unplaced"/>
</dbReference>
<dbReference type="GO" id="GO:0005886">
    <property type="term" value="C:plasma membrane"/>
    <property type="evidence" value="ECO:0000318"/>
    <property type="project" value="GO_Central"/>
</dbReference>
<dbReference type="GO" id="GO:0005509">
    <property type="term" value="F:calcium ion binding"/>
    <property type="evidence" value="ECO:0007669"/>
    <property type="project" value="InterPro"/>
</dbReference>
<dbReference type="GO" id="GO:0007155">
    <property type="term" value="P:cell adhesion"/>
    <property type="evidence" value="ECO:0000318"/>
    <property type="project" value="GO_Central"/>
</dbReference>
<dbReference type="GO" id="GO:0007156">
    <property type="term" value="P:homophilic cell adhesion via plasma membrane adhesion molecules"/>
    <property type="evidence" value="ECO:0007669"/>
    <property type="project" value="InterPro"/>
</dbReference>
<dbReference type="GO" id="GO:0007399">
    <property type="term" value="P:nervous system development"/>
    <property type="evidence" value="ECO:0007669"/>
    <property type="project" value="UniProtKB-ARBA"/>
</dbReference>
<dbReference type="CDD" id="cd11304">
    <property type="entry name" value="Cadherin_repeat"/>
    <property type="match status" value="5"/>
</dbReference>
<dbReference type="FunFam" id="2.60.40.60:FF:000001">
    <property type="entry name" value="Protocadherin alpha 2"/>
    <property type="match status" value="1"/>
</dbReference>
<dbReference type="FunFam" id="2.60.40.60:FF:000002">
    <property type="entry name" value="Protocadherin alpha 2"/>
    <property type="match status" value="1"/>
</dbReference>
<dbReference type="FunFam" id="2.60.40.60:FF:000006">
    <property type="entry name" value="Protocadherin alpha 2"/>
    <property type="match status" value="1"/>
</dbReference>
<dbReference type="FunFam" id="2.60.40.60:FF:000046">
    <property type="entry name" value="Protocadherin beta 5"/>
    <property type="match status" value="1"/>
</dbReference>
<dbReference type="FunFam" id="2.60.40.60:FF:000309">
    <property type="entry name" value="Protocadherin beta-8"/>
    <property type="match status" value="1"/>
</dbReference>
<dbReference type="FunFam" id="2.60.40.60:FF:000018">
    <property type="entry name" value="Protocadherin gamma c3"/>
    <property type="match status" value="1"/>
</dbReference>
<dbReference type="Gene3D" id="2.60.40.60">
    <property type="entry name" value="Cadherins"/>
    <property type="match status" value="6"/>
</dbReference>
<dbReference type="InterPro" id="IPR002126">
    <property type="entry name" value="Cadherin-like_dom"/>
</dbReference>
<dbReference type="InterPro" id="IPR015919">
    <property type="entry name" value="Cadherin-like_sf"/>
</dbReference>
<dbReference type="InterPro" id="IPR032455">
    <property type="entry name" value="Cadherin_C"/>
</dbReference>
<dbReference type="InterPro" id="IPR020894">
    <property type="entry name" value="Cadherin_CS"/>
</dbReference>
<dbReference type="InterPro" id="IPR013164">
    <property type="entry name" value="Cadherin_N"/>
</dbReference>
<dbReference type="InterPro" id="IPR050174">
    <property type="entry name" value="Protocadherin/Cadherin-CA"/>
</dbReference>
<dbReference type="PANTHER" id="PTHR24028">
    <property type="entry name" value="CADHERIN-87A"/>
    <property type="match status" value="1"/>
</dbReference>
<dbReference type="PANTHER" id="PTHR24028:SF98">
    <property type="entry name" value="PROTOCADHERIN BETA-18-RELATED"/>
    <property type="match status" value="1"/>
</dbReference>
<dbReference type="Pfam" id="PF00028">
    <property type="entry name" value="Cadherin"/>
    <property type="match status" value="5"/>
</dbReference>
<dbReference type="Pfam" id="PF08266">
    <property type="entry name" value="Cadherin_2"/>
    <property type="match status" value="1"/>
</dbReference>
<dbReference type="Pfam" id="PF16492">
    <property type="entry name" value="Cadherin_C_2"/>
    <property type="match status" value="1"/>
</dbReference>
<dbReference type="PRINTS" id="PR00205">
    <property type="entry name" value="CADHERIN"/>
</dbReference>
<dbReference type="SMART" id="SM00112">
    <property type="entry name" value="CA"/>
    <property type="match status" value="5"/>
</dbReference>
<dbReference type="SUPFAM" id="SSF49313">
    <property type="entry name" value="Cadherin-like"/>
    <property type="match status" value="6"/>
</dbReference>
<dbReference type="PROSITE" id="PS00232">
    <property type="entry name" value="CADHERIN_1"/>
    <property type="match status" value="5"/>
</dbReference>
<dbReference type="PROSITE" id="PS50268">
    <property type="entry name" value="CADHERIN_2"/>
    <property type="match status" value="6"/>
</dbReference>
<proteinExistence type="inferred from homology"/>